<comment type="function">
    <text>Lysis proteins are required for both colicin release and partial cell lysis.</text>
</comment>
<comment type="subcellular location">
    <subcellularLocation>
        <location evidence="2">Cell outer membrane</location>
        <topology evidence="1">Lipid-anchor</topology>
    </subcellularLocation>
</comment>
<protein>
    <recommendedName>
        <fullName>Lysis protein for colicin E1</fullName>
    </recommendedName>
</protein>
<reference key="1">
    <citation type="journal article" date="1985" name="Proc. Natl. Acad. Sci. U.S.A.">
        <title>Structural and functional organization of the colicin E1 operon.</title>
        <authorList>
            <person name="Waleh N.S."/>
            <person name="Johnson P.H."/>
        </authorList>
    </citation>
    <scope>NUCLEOTIDE SEQUENCE [GENOMIC DNA]</scope>
</reference>
<reference key="2">
    <citation type="journal article" date="1994" name="Proc. Natl. Acad. Sci. U.S.A.">
        <title>Nucleotide polymorphism in colicin E1 and Ia plasmids from natural isolates of Escherichia coli.</title>
        <authorList>
            <person name="Riley M.A."/>
            <person name="Tan Y."/>
            <person name="Wang J."/>
        </authorList>
    </citation>
    <scope>NUCLEOTIDE SEQUENCE [GENOMIC DNA]</scope>
    <source>
        <strain>EC31</strain>
        <strain>EC71</strain>
    </source>
</reference>
<gene>
    <name type="primary">lys</name>
</gene>
<keyword id="KW-0998">Cell outer membrane</keyword>
<keyword id="KW-0449">Lipoprotein</keyword>
<keyword id="KW-0472">Membrane</keyword>
<keyword id="KW-0564">Palmitate</keyword>
<keyword id="KW-0614">Plasmid</keyword>
<keyword id="KW-0732">Signal</keyword>
<name>LYS3_ECOLX</name>
<accession>P05821</accession>
<proteinExistence type="inferred from homology"/>
<evidence type="ECO:0000255" key="1">
    <source>
        <dbReference type="PROSITE-ProRule" id="PRU00303"/>
    </source>
</evidence>
<evidence type="ECO:0000305" key="2"/>
<feature type="signal peptide" evidence="1">
    <location>
        <begin position="1"/>
        <end position="17"/>
    </location>
</feature>
<feature type="chain" id="PRO_0000005682" description="Lysis protein for colicin E1">
    <location>
        <begin position="18"/>
        <end position="45"/>
    </location>
</feature>
<feature type="lipid moiety-binding region" description="N-palmitoyl cysteine" evidence="1">
    <location>
        <position position="18"/>
    </location>
</feature>
<feature type="lipid moiety-binding region" description="S-diacylglycerol cysteine" evidence="1">
    <location>
        <position position="18"/>
    </location>
</feature>
<sequence length="45" mass="4829">MRKRFFVGIFAINLLVGCQANYIRDVQGGTIAPSSSSKLTGIAVQ</sequence>
<geneLocation type="plasmid">
    <name>ColE1</name>
</geneLocation>
<dbReference type="EMBL" id="M12543">
    <property type="protein sequence ID" value="AAA23067.1"/>
    <property type="molecule type" value="Genomic_DNA"/>
</dbReference>
<dbReference type="EMBL" id="U15629">
    <property type="protein sequence ID" value="AAA59411.1"/>
    <property type="molecule type" value="Genomic_DNA"/>
</dbReference>
<dbReference type="EMBL" id="U15633">
    <property type="protein sequence ID" value="AAA59419.1"/>
    <property type="molecule type" value="Genomic_DNA"/>
</dbReference>
<dbReference type="PIR" id="B24685">
    <property type="entry name" value="ZHECP1"/>
</dbReference>
<dbReference type="RefSeq" id="WP_001405930.1">
    <property type="nucleotide sequence ID" value="NZ_WXYY01000009.1"/>
</dbReference>
<dbReference type="SMR" id="P05821"/>
<dbReference type="TCDB" id="1.A.73.1.1">
    <property type="family name" value="the colicin lysis protein (clp) family"/>
</dbReference>
<dbReference type="GO" id="GO:0009279">
    <property type="term" value="C:cell outer membrane"/>
    <property type="evidence" value="ECO:0007669"/>
    <property type="project" value="UniProtKB-SubCell"/>
</dbReference>
<dbReference type="GO" id="GO:0019835">
    <property type="term" value="P:cytolysis"/>
    <property type="evidence" value="ECO:0007669"/>
    <property type="project" value="InterPro"/>
</dbReference>
<dbReference type="InterPro" id="IPR003059">
    <property type="entry name" value="Lysis_col"/>
</dbReference>
<dbReference type="Pfam" id="PF02402">
    <property type="entry name" value="Lysis_col"/>
    <property type="match status" value="1"/>
</dbReference>
<dbReference type="PRINTS" id="PR01297">
    <property type="entry name" value="LYSISCOLICIN"/>
</dbReference>
<dbReference type="PROSITE" id="PS51257">
    <property type="entry name" value="PROKAR_LIPOPROTEIN"/>
    <property type="match status" value="1"/>
</dbReference>
<organism>
    <name type="scientific">Escherichia coli</name>
    <dbReference type="NCBI Taxonomy" id="562"/>
    <lineage>
        <taxon>Bacteria</taxon>
        <taxon>Pseudomonadati</taxon>
        <taxon>Pseudomonadota</taxon>
        <taxon>Gammaproteobacteria</taxon>
        <taxon>Enterobacterales</taxon>
        <taxon>Enterobacteriaceae</taxon>
        <taxon>Escherichia</taxon>
    </lineage>
</organism>